<evidence type="ECO:0000255" key="1"/>
<evidence type="ECO:0000255" key="2">
    <source>
        <dbReference type="PROSITE-ProRule" id="PRU00258"/>
    </source>
</evidence>
<evidence type="ECO:0000255" key="3">
    <source>
        <dbReference type="PROSITE-ProRule" id="PRU01348"/>
    </source>
</evidence>
<evidence type="ECO:0000255" key="4">
    <source>
        <dbReference type="PROSITE-ProRule" id="PRU01363"/>
    </source>
</evidence>
<evidence type="ECO:0000256" key="5">
    <source>
        <dbReference type="SAM" id="MobiDB-lite"/>
    </source>
</evidence>
<evidence type="ECO:0000269" key="6">
    <source>
    </source>
</evidence>
<evidence type="ECO:0000269" key="7">
    <source>
    </source>
</evidence>
<evidence type="ECO:0000269" key="8">
    <source>
    </source>
</evidence>
<evidence type="ECO:0000269" key="9">
    <source>
    </source>
</evidence>
<evidence type="ECO:0000269" key="10">
    <source>
    </source>
</evidence>
<evidence type="ECO:0000269" key="11">
    <source>
    </source>
</evidence>
<evidence type="ECO:0000303" key="12">
    <source>
    </source>
</evidence>
<evidence type="ECO:0000303" key="13">
    <source>
    </source>
</evidence>
<evidence type="ECO:0000303" key="14">
    <source>
    </source>
</evidence>
<evidence type="ECO:0000305" key="15"/>
<evidence type="ECO:0000305" key="16">
    <source>
    </source>
</evidence>
<evidence type="ECO:0000305" key="17">
    <source>
    </source>
</evidence>
<reference key="1">
    <citation type="journal article" date="2005" name="Nature">
        <title>Genomic sequence of the pathogenic and allergenic filamentous fungus Aspergillus fumigatus.</title>
        <authorList>
            <person name="Nierman W.C."/>
            <person name="Pain A."/>
            <person name="Anderson M.J."/>
            <person name="Wortman J.R."/>
            <person name="Kim H.S."/>
            <person name="Arroyo J."/>
            <person name="Berriman M."/>
            <person name="Abe K."/>
            <person name="Archer D.B."/>
            <person name="Bermejo C."/>
            <person name="Bennett J.W."/>
            <person name="Bowyer P."/>
            <person name="Chen D."/>
            <person name="Collins M."/>
            <person name="Coulsen R."/>
            <person name="Davies R."/>
            <person name="Dyer P.S."/>
            <person name="Farman M.L."/>
            <person name="Fedorova N."/>
            <person name="Fedorova N.D."/>
            <person name="Feldblyum T.V."/>
            <person name="Fischer R."/>
            <person name="Fosker N."/>
            <person name="Fraser A."/>
            <person name="Garcia J.L."/>
            <person name="Garcia M.J."/>
            <person name="Goble A."/>
            <person name="Goldman G.H."/>
            <person name="Gomi K."/>
            <person name="Griffith-Jones S."/>
            <person name="Gwilliam R."/>
            <person name="Haas B.J."/>
            <person name="Haas H."/>
            <person name="Harris D.E."/>
            <person name="Horiuchi H."/>
            <person name="Huang J."/>
            <person name="Humphray S."/>
            <person name="Jimenez J."/>
            <person name="Keller N."/>
            <person name="Khouri H."/>
            <person name="Kitamoto K."/>
            <person name="Kobayashi T."/>
            <person name="Konzack S."/>
            <person name="Kulkarni R."/>
            <person name="Kumagai T."/>
            <person name="Lafton A."/>
            <person name="Latge J.-P."/>
            <person name="Li W."/>
            <person name="Lord A."/>
            <person name="Lu C."/>
            <person name="Majoros W.H."/>
            <person name="May G.S."/>
            <person name="Miller B.L."/>
            <person name="Mohamoud Y."/>
            <person name="Molina M."/>
            <person name="Monod M."/>
            <person name="Mouyna I."/>
            <person name="Mulligan S."/>
            <person name="Murphy L.D."/>
            <person name="O'Neil S."/>
            <person name="Paulsen I."/>
            <person name="Penalva M.A."/>
            <person name="Pertea M."/>
            <person name="Price C."/>
            <person name="Pritchard B.L."/>
            <person name="Quail M.A."/>
            <person name="Rabbinowitsch E."/>
            <person name="Rawlins N."/>
            <person name="Rajandream M.A."/>
            <person name="Reichard U."/>
            <person name="Renauld H."/>
            <person name="Robson G.D."/>
            <person name="Rodriguez de Cordoba S."/>
            <person name="Rodriguez-Pena J.M."/>
            <person name="Ronning C.M."/>
            <person name="Rutter S."/>
            <person name="Salzberg S.L."/>
            <person name="Sanchez M."/>
            <person name="Sanchez-Ferrero J.C."/>
            <person name="Saunders D."/>
            <person name="Seeger K."/>
            <person name="Squares R."/>
            <person name="Squares S."/>
            <person name="Takeuchi M."/>
            <person name="Tekaia F."/>
            <person name="Turner G."/>
            <person name="Vazquez de Aldana C.R."/>
            <person name="Weidman J."/>
            <person name="White O."/>
            <person name="Woodward J.R."/>
            <person name="Yu J.-H."/>
            <person name="Fraser C.M."/>
            <person name="Galagan J.E."/>
            <person name="Asai K."/>
            <person name="Machida M."/>
            <person name="Hall N."/>
            <person name="Barrell B.G."/>
            <person name="Denning D.W."/>
        </authorList>
    </citation>
    <scope>NUCLEOTIDE SEQUENCE [LARGE SCALE GENOMIC DNA]</scope>
    <source>
        <strain>ATCC MYA-4609 / CBS 101355 / FGSC A1100 / Af293</strain>
    </source>
</reference>
<reference key="2">
    <citation type="journal article" date="2005" name="Mol. Biol. Cell">
        <title>The Aspergillus fumigatus StuA protein governs the up-regulation of a discrete transcriptional program during the acquisition of developmental competence.</title>
        <authorList>
            <person name="Sheppard D.C."/>
            <person name="Doedt T."/>
            <person name="Chiang L.Y."/>
            <person name="Kim H.S."/>
            <person name="Chen D."/>
            <person name="Nierman W.C."/>
            <person name="Filler S.G."/>
        </authorList>
    </citation>
    <scope>INDUCTION</scope>
</reference>
<reference key="3">
    <citation type="journal article" date="2006" name="Gene">
        <title>Phylogenomic analysis of non-ribosomal peptide synthetases in the genus Aspergillus.</title>
        <authorList>
            <person name="Cramer R.A. Jr."/>
            <person name="Stajich J.E."/>
            <person name="Yamanaka Y."/>
            <person name="Dietrich F.S."/>
            <person name="Steinbach W.J."/>
            <person name="Perfect J.R."/>
        </authorList>
    </citation>
    <scope>NOMENCLATURE</scope>
</reference>
<reference key="4">
    <citation type="journal article" date="2007" name="ChemBioChem">
        <title>Identification of a hybrid PKS/NRPS required for pseurotin A biosynthesis in the human pathogen Aspergillus fumigatus.</title>
        <authorList>
            <person name="Maiya S."/>
            <person name="Grundmann A."/>
            <person name="Li X."/>
            <person name="Li S.M."/>
            <person name="Turner G."/>
        </authorList>
    </citation>
    <scope>FUNCTION</scope>
    <scope>DISRUPTION PHENOTYPE</scope>
</reference>
<reference key="5">
    <citation type="journal article" date="2007" name="Microbiology">
        <title>Nonribosomal peptide synthesis in Aspergillus fumigatus and other fungi.</title>
        <authorList>
            <person name="Stack D."/>
            <person name="Neville C."/>
            <person name="Doyle S."/>
        </authorList>
    </citation>
    <scope>REVIEW ON FUNCTION</scope>
    <scope>DOMAIN</scope>
</reference>
<reference key="6">
    <citation type="journal article" date="2011" name="J. Proteome Res.">
        <title>Analysis of the Aspergillus fumigatus proteome reveals metabolic changes and the activation of the pseurotin A biosynthesis gene cluster in response to hypoxia.</title>
        <authorList>
            <person name="Voedisch M."/>
            <person name="Scherlach K."/>
            <person name="Winkler R."/>
            <person name="Hertweck C."/>
            <person name="Braun H.P."/>
            <person name="Roth M."/>
            <person name="Haas H."/>
            <person name="Werner E.R."/>
            <person name="Brakhage A.A."/>
            <person name="Kniemeyer O."/>
        </authorList>
    </citation>
    <scope>INDUCTION</scope>
</reference>
<reference key="7">
    <citation type="journal article" date="2013" name="Proc. Natl. Acad. Sci. U.S.A.">
        <title>Prototype of an intertwined secondary-metabolite supercluster.</title>
        <authorList>
            <person name="Wiemann P."/>
            <person name="Guo C.J."/>
            <person name="Palmer J.M."/>
            <person name="Sekonyela R."/>
            <person name="Wang C.C."/>
            <person name="Keller N.P."/>
        </authorList>
    </citation>
    <scope>FUNCTION</scope>
    <scope>DISRUPTION PHENOTYPE</scope>
</reference>
<reference key="8">
    <citation type="journal article" date="2014" name="Angew. Chem. Int. Ed.">
        <title>Elucidation of pseurotin biosynthetic pathway points to trans-acting C-methyltransferase: generation of chemical diversity.</title>
        <authorList>
            <person name="Tsunematsu Y."/>
            <person name="Fukutomi M."/>
            <person name="Saruwatari T."/>
            <person name="Noguchi H."/>
            <person name="Hotta K."/>
            <person name="Tang Y."/>
            <person name="Watanabe K."/>
        </authorList>
    </citation>
    <scope>FUNCTION</scope>
</reference>
<organism>
    <name type="scientific">Aspergillus fumigatus (strain ATCC MYA-4609 / CBS 101355 / FGSC A1100 / Af293)</name>
    <name type="common">Neosartorya fumigata</name>
    <dbReference type="NCBI Taxonomy" id="330879"/>
    <lineage>
        <taxon>Eukaryota</taxon>
        <taxon>Fungi</taxon>
        <taxon>Dikarya</taxon>
        <taxon>Ascomycota</taxon>
        <taxon>Pezizomycotina</taxon>
        <taxon>Eurotiomycetes</taxon>
        <taxon>Eurotiomycetidae</taxon>
        <taxon>Eurotiales</taxon>
        <taxon>Aspergillaceae</taxon>
        <taxon>Aspergillus</taxon>
        <taxon>Aspergillus subgen. Fumigati</taxon>
    </lineage>
</organism>
<keyword id="KW-0436">Ligase</keyword>
<keyword id="KW-0596">Phosphopantetheine</keyword>
<keyword id="KW-0597">Phosphoprotein</keyword>
<keyword id="KW-1185">Reference proteome</keyword>
<keyword id="KW-0677">Repeat</keyword>
<keyword id="KW-0808">Transferase</keyword>
<dbReference type="EC" id="2.3.1.-" evidence="16 17"/>
<dbReference type="EC" id="6.3.2.-" evidence="16 17"/>
<dbReference type="EMBL" id="AAHF01000014">
    <property type="protein sequence ID" value="EAL85113.2"/>
    <property type="molecule type" value="Genomic_DNA"/>
</dbReference>
<dbReference type="RefSeq" id="XP_747151.2">
    <property type="nucleotide sequence ID" value="XM_742058.2"/>
</dbReference>
<dbReference type="SMR" id="Q4WAZ9"/>
<dbReference type="STRING" id="330879.Q4WAZ9"/>
<dbReference type="EnsemblFungi" id="EAL85113">
    <property type="protein sequence ID" value="EAL85113"/>
    <property type="gene ID" value="AFUA_8G00540"/>
</dbReference>
<dbReference type="GeneID" id="3504510"/>
<dbReference type="KEGG" id="afm:AFUA_8G00540"/>
<dbReference type="VEuPathDB" id="FungiDB:Afu8g00540"/>
<dbReference type="eggNOG" id="KOG1178">
    <property type="taxonomic scope" value="Eukaryota"/>
</dbReference>
<dbReference type="eggNOG" id="KOG1202">
    <property type="taxonomic scope" value="Eukaryota"/>
</dbReference>
<dbReference type="HOGENOM" id="CLU_000022_37_0_1"/>
<dbReference type="InParanoid" id="Q4WAZ9"/>
<dbReference type="OMA" id="TDYEPRW"/>
<dbReference type="OrthoDB" id="329835at2759"/>
<dbReference type="Proteomes" id="UP000002530">
    <property type="component" value="Chromosome 8"/>
</dbReference>
<dbReference type="GO" id="GO:0004315">
    <property type="term" value="F:3-oxoacyl-[acyl-carrier-protein] synthase activity"/>
    <property type="evidence" value="ECO:0007669"/>
    <property type="project" value="InterPro"/>
</dbReference>
<dbReference type="GO" id="GO:0004312">
    <property type="term" value="F:fatty acid synthase activity"/>
    <property type="evidence" value="ECO:0000318"/>
    <property type="project" value="GO_Central"/>
</dbReference>
<dbReference type="GO" id="GO:0016874">
    <property type="term" value="F:ligase activity"/>
    <property type="evidence" value="ECO:0007669"/>
    <property type="project" value="UniProtKB-KW"/>
</dbReference>
<dbReference type="GO" id="GO:0031177">
    <property type="term" value="F:phosphopantetheine binding"/>
    <property type="evidence" value="ECO:0007669"/>
    <property type="project" value="InterPro"/>
</dbReference>
<dbReference type="GO" id="GO:0006633">
    <property type="term" value="P:fatty acid biosynthetic process"/>
    <property type="evidence" value="ECO:0000318"/>
    <property type="project" value="GO_Central"/>
</dbReference>
<dbReference type="GO" id="GO:0019184">
    <property type="term" value="P:nonribosomal peptide biosynthetic process"/>
    <property type="evidence" value="ECO:0000255"/>
    <property type="project" value="AspGD"/>
</dbReference>
<dbReference type="GO" id="GO:1900790">
    <property type="term" value="P:pseurotin A biosynthetic process"/>
    <property type="evidence" value="ECO:0000315"/>
    <property type="project" value="AspGD"/>
</dbReference>
<dbReference type="GO" id="GO:0019748">
    <property type="term" value="P:secondary metabolic process"/>
    <property type="evidence" value="ECO:0000303"/>
    <property type="project" value="AspGD"/>
</dbReference>
<dbReference type="GO" id="GO:0044550">
    <property type="term" value="P:secondary metabolite biosynthetic process"/>
    <property type="evidence" value="ECO:0000315"/>
    <property type="project" value="AspGD"/>
</dbReference>
<dbReference type="CDD" id="cd05930">
    <property type="entry name" value="A_NRPS"/>
    <property type="match status" value="1"/>
</dbReference>
<dbReference type="CDD" id="cd19532">
    <property type="entry name" value="C_PKS-NRPS"/>
    <property type="match status" value="1"/>
</dbReference>
<dbReference type="CDD" id="cd00833">
    <property type="entry name" value="PKS"/>
    <property type="match status" value="1"/>
</dbReference>
<dbReference type="FunFam" id="3.10.129.110:FF:000012">
    <property type="entry name" value="PKS-NRPS hybrid synthetase psoA"/>
    <property type="match status" value="1"/>
</dbReference>
<dbReference type="FunFam" id="3.40.47.10:FF:000019">
    <property type="entry name" value="Polyketide synthase type I"/>
    <property type="match status" value="1"/>
</dbReference>
<dbReference type="FunFam" id="3.40.366.10:FF:000002">
    <property type="entry name" value="Probable polyketide synthase 2"/>
    <property type="match status" value="1"/>
</dbReference>
<dbReference type="Gene3D" id="3.30.300.30">
    <property type="match status" value="1"/>
</dbReference>
<dbReference type="Gene3D" id="3.30.70.3290">
    <property type="match status" value="1"/>
</dbReference>
<dbReference type="Gene3D" id="3.40.47.10">
    <property type="match status" value="1"/>
</dbReference>
<dbReference type="Gene3D" id="1.10.1200.10">
    <property type="entry name" value="ACP-like"/>
    <property type="match status" value="2"/>
</dbReference>
<dbReference type="Gene3D" id="3.30.559.10">
    <property type="entry name" value="Chloramphenicol acetyltransferase-like domain"/>
    <property type="match status" value="1"/>
</dbReference>
<dbReference type="Gene3D" id="3.40.366.10">
    <property type="entry name" value="Malonyl-Coenzyme A Acyl Carrier Protein, domain 2"/>
    <property type="match status" value="1"/>
</dbReference>
<dbReference type="Gene3D" id="3.40.50.12780">
    <property type="entry name" value="N-terminal domain of ligase-like"/>
    <property type="match status" value="1"/>
</dbReference>
<dbReference type="Gene3D" id="3.40.50.720">
    <property type="entry name" value="NAD(P)-binding Rossmann-like Domain"/>
    <property type="match status" value="3"/>
</dbReference>
<dbReference type="Gene3D" id="3.30.559.30">
    <property type="entry name" value="Nonribosomal peptide synthetase, condensation domain"/>
    <property type="match status" value="1"/>
</dbReference>
<dbReference type="Gene3D" id="3.10.129.110">
    <property type="entry name" value="Polyketide synthase dehydratase"/>
    <property type="match status" value="1"/>
</dbReference>
<dbReference type="Gene3D" id="3.40.50.150">
    <property type="entry name" value="Vaccinia Virus protein VP39"/>
    <property type="match status" value="1"/>
</dbReference>
<dbReference type="InterPro" id="IPR001227">
    <property type="entry name" value="Ac_transferase_dom_sf"/>
</dbReference>
<dbReference type="InterPro" id="IPR036736">
    <property type="entry name" value="ACP-like_sf"/>
</dbReference>
<dbReference type="InterPro" id="IPR014043">
    <property type="entry name" value="Acyl_transferase_dom"/>
</dbReference>
<dbReference type="InterPro" id="IPR016035">
    <property type="entry name" value="Acyl_Trfase/lysoPLipase"/>
</dbReference>
<dbReference type="InterPro" id="IPR045851">
    <property type="entry name" value="AMP-bd_C_sf"/>
</dbReference>
<dbReference type="InterPro" id="IPR020845">
    <property type="entry name" value="AMP-binding_CS"/>
</dbReference>
<dbReference type="InterPro" id="IPR000873">
    <property type="entry name" value="AMP-dep_synth/lig_dom"/>
</dbReference>
<dbReference type="InterPro" id="IPR042099">
    <property type="entry name" value="ANL_N_sf"/>
</dbReference>
<dbReference type="InterPro" id="IPR023213">
    <property type="entry name" value="CAT-like_dom_sf"/>
</dbReference>
<dbReference type="InterPro" id="IPR001242">
    <property type="entry name" value="Condensatn"/>
</dbReference>
<dbReference type="InterPro" id="IPR013120">
    <property type="entry name" value="Far_NAD-bd"/>
</dbReference>
<dbReference type="InterPro" id="IPR018201">
    <property type="entry name" value="Ketoacyl_synth_AS"/>
</dbReference>
<dbReference type="InterPro" id="IPR014031">
    <property type="entry name" value="Ketoacyl_synth_C"/>
</dbReference>
<dbReference type="InterPro" id="IPR014030">
    <property type="entry name" value="Ketoacyl_synth_N"/>
</dbReference>
<dbReference type="InterPro" id="IPR016036">
    <property type="entry name" value="Malonyl_transacylase_ACP-bd"/>
</dbReference>
<dbReference type="InterPro" id="IPR036291">
    <property type="entry name" value="NAD(P)-bd_dom_sf"/>
</dbReference>
<dbReference type="InterPro" id="IPR020841">
    <property type="entry name" value="PKS_Beta-ketoAc_synthase_dom"/>
</dbReference>
<dbReference type="InterPro" id="IPR042104">
    <property type="entry name" value="PKS_dehydratase_sf"/>
</dbReference>
<dbReference type="InterPro" id="IPR020807">
    <property type="entry name" value="PKS_DH"/>
</dbReference>
<dbReference type="InterPro" id="IPR049551">
    <property type="entry name" value="PKS_DH_C"/>
</dbReference>
<dbReference type="InterPro" id="IPR049552">
    <property type="entry name" value="PKS_DH_N"/>
</dbReference>
<dbReference type="InterPro" id="IPR013968">
    <property type="entry name" value="PKS_KR"/>
</dbReference>
<dbReference type="InterPro" id="IPR049900">
    <property type="entry name" value="PKS_mFAS_DH"/>
</dbReference>
<dbReference type="InterPro" id="IPR050091">
    <property type="entry name" value="PKS_NRPS_Biosynth_Enz"/>
</dbReference>
<dbReference type="InterPro" id="IPR020806">
    <property type="entry name" value="PKS_PP-bd"/>
</dbReference>
<dbReference type="InterPro" id="IPR009081">
    <property type="entry name" value="PP-bd_ACP"/>
</dbReference>
<dbReference type="InterPro" id="IPR054514">
    <property type="entry name" value="RhiE-like_linker"/>
</dbReference>
<dbReference type="InterPro" id="IPR029063">
    <property type="entry name" value="SAM-dependent_MTases_sf"/>
</dbReference>
<dbReference type="InterPro" id="IPR016039">
    <property type="entry name" value="Thiolase-like"/>
</dbReference>
<dbReference type="PANTHER" id="PTHR43775">
    <property type="entry name" value="FATTY ACID SYNTHASE"/>
    <property type="match status" value="1"/>
</dbReference>
<dbReference type="PANTHER" id="PTHR43775:SF20">
    <property type="entry name" value="HYBRID PKS-NRPS SYNTHETASE APDA"/>
    <property type="match status" value="1"/>
</dbReference>
<dbReference type="Pfam" id="PF23297">
    <property type="entry name" value="ACP_SdgA_C"/>
    <property type="match status" value="1"/>
</dbReference>
<dbReference type="Pfam" id="PF00698">
    <property type="entry name" value="Acyl_transf_1"/>
    <property type="match status" value="1"/>
</dbReference>
<dbReference type="Pfam" id="PF00501">
    <property type="entry name" value="AMP-binding"/>
    <property type="match status" value="1"/>
</dbReference>
<dbReference type="Pfam" id="PF00668">
    <property type="entry name" value="Condensation"/>
    <property type="match status" value="1"/>
</dbReference>
<dbReference type="Pfam" id="PF00109">
    <property type="entry name" value="ketoacyl-synt"/>
    <property type="match status" value="1"/>
</dbReference>
<dbReference type="Pfam" id="PF02801">
    <property type="entry name" value="Ketoacyl-synt_C"/>
    <property type="match status" value="1"/>
</dbReference>
<dbReference type="Pfam" id="PF08659">
    <property type="entry name" value="KR"/>
    <property type="match status" value="1"/>
</dbReference>
<dbReference type="Pfam" id="PF07993">
    <property type="entry name" value="NAD_binding_4"/>
    <property type="match status" value="1"/>
</dbReference>
<dbReference type="Pfam" id="PF21089">
    <property type="entry name" value="PKS_DH_N"/>
    <property type="match status" value="1"/>
</dbReference>
<dbReference type="Pfam" id="PF00550">
    <property type="entry name" value="PP-binding"/>
    <property type="match status" value="1"/>
</dbReference>
<dbReference type="Pfam" id="PF14765">
    <property type="entry name" value="PS-DH"/>
    <property type="match status" value="1"/>
</dbReference>
<dbReference type="Pfam" id="PF22336">
    <property type="entry name" value="RhiE-like_linker"/>
    <property type="match status" value="1"/>
</dbReference>
<dbReference type="SMART" id="SM00827">
    <property type="entry name" value="PKS_AT"/>
    <property type="match status" value="1"/>
</dbReference>
<dbReference type="SMART" id="SM00826">
    <property type="entry name" value="PKS_DH"/>
    <property type="match status" value="1"/>
</dbReference>
<dbReference type="SMART" id="SM00822">
    <property type="entry name" value="PKS_KR"/>
    <property type="match status" value="1"/>
</dbReference>
<dbReference type="SMART" id="SM00825">
    <property type="entry name" value="PKS_KS"/>
    <property type="match status" value="1"/>
</dbReference>
<dbReference type="SMART" id="SM00823">
    <property type="entry name" value="PKS_PP"/>
    <property type="match status" value="2"/>
</dbReference>
<dbReference type="SUPFAM" id="SSF56801">
    <property type="entry name" value="Acetyl-CoA synthetase-like"/>
    <property type="match status" value="1"/>
</dbReference>
<dbReference type="SUPFAM" id="SSF47336">
    <property type="entry name" value="ACP-like"/>
    <property type="match status" value="2"/>
</dbReference>
<dbReference type="SUPFAM" id="SSF52777">
    <property type="entry name" value="CoA-dependent acyltransferases"/>
    <property type="match status" value="2"/>
</dbReference>
<dbReference type="SUPFAM" id="SSF52151">
    <property type="entry name" value="FabD/lysophospholipase-like"/>
    <property type="match status" value="1"/>
</dbReference>
<dbReference type="SUPFAM" id="SSF51735">
    <property type="entry name" value="NAD(P)-binding Rossmann-fold domains"/>
    <property type="match status" value="3"/>
</dbReference>
<dbReference type="SUPFAM" id="SSF55048">
    <property type="entry name" value="Probable ACP-binding domain of malonyl-CoA ACP transacylase"/>
    <property type="match status" value="1"/>
</dbReference>
<dbReference type="SUPFAM" id="SSF53335">
    <property type="entry name" value="S-adenosyl-L-methionine-dependent methyltransferases"/>
    <property type="match status" value="1"/>
</dbReference>
<dbReference type="SUPFAM" id="SSF53901">
    <property type="entry name" value="Thiolase-like"/>
    <property type="match status" value="1"/>
</dbReference>
<dbReference type="PROSITE" id="PS00061">
    <property type="entry name" value="ADH_SHORT"/>
    <property type="match status" value="1"/>
</dbReference>
<dbReference type="PROSITE" id="PS00455">
    <property type="entry name" value="AMP_BINDING"/>
    <property type="match status" value="1"/>
</dbReference>
<dbReference type="PROSITE" id="PS50075">
    <property type="entry name" value="CARRIER"/>
    <property type="match status" value="2"/>
</dbReference>
<dbReference type="PROSITE" id="PS00606">
    <property type="entry name" value="KS3_1"/>
    <property type="match status" value="1"/>
</dbReference>
<dbReference type="PROSITE" id="PS52004">
    <property type="entry name" value="KS3_2"/>
    <property type="match status" value="1"/>
</dbReference>
<dbReference type="PROSITE" id="PS52019">
    <property type="entry name" value="PKS_MFAS_DH"/>
    <property type="match status" value="1"/>
</dbReference>
<feature type="chain" id="PRO_0000416555" description="PKS-NRPS hybrid synthetase psoA">
    <location>
        <begin position="1"/>
        <end position="4007"/>
    </location>
</feature>
<feature type="domain" description="Ketosynthase family 3 (KS3)" evidence="3">
    <location>
        <begin position="8"/>
        <end position="444"/>
    </location>
</feature>
<feature type="domain" description="PKS/mFAS DH" evidence="4">
    <location>
        <begin position="969"/>
        <end position="1276"/>
    </location>
</feature>
<feature type="domain" description="Carrier 1" evidence="2">
    <location>
        <begin position="2418"/>
        <end position="2495"/>
    </location>
</feature>
<feature type="domain" description="Carrier 2" evidence="2">
    <location>
        <begin position="3576"/>
        <end position="3652"/>
    </location>
</feature>
<feature type="region of interest" description="Malonyl-CoA:ACP transacylase (MAT) domain" evidence="1">
    <location>
        <begin position="575"/>
        <end position="897"/>
    </location>
</feature>
<feature type="region of interest" description="Dehydratase (DH) domain" evidence="1">
    <location>
        <begin position="969"/>
        <end position="1147"/>
    </location>
</feature>
<feature type="region of interest" description="N-terminal hotdog fold" evidence="4">
    <location>
        <begin position="969"/>
        <end position="1105"/>
    </location>
</feature>
<feature type="region of interest" description="C-terminal hotdog fold" evidence="4">
    <location>
        <begin position="1120"/>
        <end position="1276"/>
    </location>
</feature>
<feature type="region of interest" description="Ketoreductase (KR) domain" evidence="1">
    <location>
        <begin position="2131"/>
        <end position="2305"/>
    </location>
</feature>
<feature type="region of interest" description="Disordered" evidence="5">
    <location>
        <begin position="2513"/>
        <end position="2550"/>
    </location>
</feature>
<feature type="region of interest" description="Condensation (C) domain" evidence="1">
    <location>
        <begin position="2589"/>
        <end position="2885"/>
    </location>
</feature>
<feature type="region of interest" description="Adenylation (A) domain" evidence="1">
    <location>
        <begin position="3076"/>
        <end position="3478"/>
    </location>
</feature>
<feature type="region of interest" description="Reductase (R) domain" evidence="1">
    <location>
        <begin position="3696"/>
        <end position="3920"/>
    </location>
</feature>
<feature type="compositionally biased region" description="Basic and acidic residues" evidence="5">
    <location>
        <begin position="2518"/>
        <end position="2531"/>
    </location>
</feature>
<feature type="active site" description="For beta-ketoacyl synthase activity" evidence="3">
    <location>
        <position position="182"/>
    </location>
</feature>
<feature type="active site" description="For beta-ketoacyl synthase activity" evidence="3">
    <location>
        <position position="321"/>
    </location>
</feature>
<feature type="active site" description="For beta-ketoacyl synthase activity" evidence="3">
    <location>
        <position position="364"/>
    </location>
</feature>
<feature type="active site" description="Proton acceptor; for dehydratase activity" evidence="4">
    <location>
        <position position="1001"/>
    </location>
</feature>
<feature type="active site" description="Proton donor; for dehydratase activity" evidence="4">
    <location>
        <position position="1179"/>
    </location>
</feature>
<feature type="modified residue" description="O-(pantetheine 4'-phosphoryl)serine" evidence="2">
    <location>
        <position position="2455"/>
    </location>
</feature>
<feature type="modified residue" description="O-(pantetheine 4'-phosphoryl)serine" evidence="2">
    <location>
        <position position="3612"/>
    </location>
</feature>
<comment type="function">
    <text evidence="7 8 10 11">PKS-NRPS hybrid synthetase; part of the gene cluster that mediates the biosynthesis of pseurotin A, a competitive inhibitor of chitin synthase and an inducer of nerve-cell proliferation (PubMed:17464044, PubMed:17722120, PubMed:24082142, PubMed:24939566). The PKS-NRPS hybrid synthetase psoA is responsible for the biosynthesis of azaspirene, one of the first intermediates having the 1-oxa-7-azaspiro[4,4]-non-2-ene-4,6-dione core of pseurotin, via condensation of one acetyl-CoA, 4 malonyl-CoA, and a L-phenylalanine molecule (PubMed:24082142, PubMed:24939566). The dual-functional monooxygenase/methyltransferase psoF seems to be involved in the addition of the C3 methyl group onto the pseurotin scaffold (PubMed:24939566). Azaspirene is then converted to synerazol through 4 steps including oxidation of C17 by the cytochrome P450 monooxygenase psoD, O-methylation of the hydroxy group of C8 by the methyltransferase psoC, and the trans-to-cis isomerization of the C13 olefin by the glutathione S-transferase psoE (PubMed:24939566). The fourth step of synerazol production is performed by the dual-functional monooxygenase/methyltransferase psoF which seems to catalyze the epoxidation of the intermediate deepoxy-synerazol (PubMed:24939566). Synerazol can be attacked by a water molecule nonenzymatically at two different positions to yield two diol products, pseurotin A and pseurotin D (PubMed:24939566).</text>
</comment>
<comment type="pathway">
    <text evidence="10 11">Secondary metabolite biosynthesis.</text>
</comment>
<comment type="induction">
    <text evidence="6 9">Expression is under the control of StuA, which is responsible for transcriptional activation during acquisition of developmental competence (PubMed:16207816). Expression is also induced under hypoxic conditions (PubMed:21388144).</text>
</comment>
<comment type="domain">
    <text evidence="7">NRP synthetases are composed of discrete domains (adenylation (A), thiolation (T) or peptidyl carrier protein (PCP) and condensation (C) domains) which when grouped together are referred to as a single module (PubMed:17464044). Each module is responsible for the recognition (via the A domain) and incorporation of a single amino acid into the growing peptide product (PubMed:17464044). Thus, an NRP synthetase is generally composed of one or more modules and can terminate in a thioesterase domain (TE) that releases the newly synthesized peptide from the enzyme. Occasionally, epimerase (E) domains (responsible for l- to d- amino acid conversion) are present within the NRP synthetase (PubMed:17464044). NRPS14 also contains a ketoacyl synthase domain (KS), an acyl transferase domain (AT), a dehydratase domain (DH), and 2 ketoreductase domains (KR) (PubMed:17464044). NRPS14 has the following architecture: KS-AT-DH-KR-T-C-A-T-KR (PubMed:17464044).</text>
</comment>
<comment type="disruption phenotype">
    <text evidence="8 10">Abolishes the production of pseurotin (PubMed:17722120, PubMed:24082142).</text>
</comment>
<comment type="similarity">
    <text evidence="15">In the C-terminal section; belongs to the NRP synthetase family.</text>
</comment>
<accession>Q4WAZ9</accession>
<name>PSOA_ASPFU</name>
<gene>
    <name evidence="12" type="primary">NRPS14</name>
    <name evidence="13" type="synonym">pesO</name>
    <name type="ORF">AFUA_8G00540</name>
</gene>
<protein>
    <recommendedName>
        <fullName evidence="14">PKS-NRPS hybrid synthetase psoA</fullName>
        <ecNumber evidence="16 17">2.3.1.-</ecNumber>
        <ecNumber evidence="16 17">6.3.2.-</ecNumber>
    </recommendedName>
    <alternativeName>
        <fullName evidence="12">Nonribosomal peptide synthetase 14</fullName>
        <shortName evidence="12">NRPS14</shortName>
    </alternativeName>
    <alternativeName>
        <fullName evidence="14">Pseurotin biosynthesis protein A</fullName>
    </alternativeName>
</protein>
<sequence length="4007" mass="435726">MVYTHSPKEPIAIIGTGCRFPGGSTSPSKLWDLLYSPRDLTREVPAESRFNPKGFYNVDGEHHGASNATNAYFIEEDPRYFDAGFFSIAPREAESIDPQQRLLLETVYEAMENAGLTLNGMRGSATSAYMGAMSADYTDTQLRDIENVSKYMITGTSRALLANRLSYFFDWKGPSISVDTACSSSLAAVHLGVQALRAGECTISCVGGSNIILNPDCYLAATSLHLLSPTGRSQMWDQAADGYARGEGVCVFFMKTLSQALRDGDRIDALLRETCVNSDGRTQGIALPSAEAQVSLMRTAYKNAGLDLSKAEDRPQYIEAHGTGTQAGDPREAYAIATTFFPPGEDHSHRPKLVVGSVKTIIGHTEGCAGIAGILKAVLAMRHKTIPPNQHFHNLNPSVKPSFKHLSIATSPQPWPVVPPDTPLRASVNGFGSGGTNCHAIVESYVPEIHDNGPWGKPKEMTQVPNGVAAPETDFSPIPLIFSASSGTALRAMLERYQEYLERTEVSLLRLAMTLNSHRSTLPVRVSIPGTSKADVLAAIRTQLAKVGSNPGAEIGTRSSVPEFDHVRRPKILGVFTGQGAQWAGMGQGLMAKSALFRQVIEVMEEAMAQLPDGPEWSLKEEIMKPPKTSRLGEAEISLPVCAALQVGLVKVLRSAGITFSMVVGHSGGEIGSAYAAGKISEVDAIKIAYYRGVYTKLAIGKDGKKGGMIAVGFGYEDGLNFCAMEQFADRLTVAASNSPKSVTLSGDLDAVHEAKELLDAEGVFNRVLRLDTAYHSPHMYPCAAPYLAAIERCGLVAGKSNGTAWASSVYDDNRMMTSAQDKDLEAAYWKDNLIGRVLFSQAVERALDEGNGDFDLALEIGPHPSLKGPTLETIRHKIGSEIPYSGVLDRKADDILALSTALGFSWLTLGSGVVDFAGYVSGFDPSNASILNAPALPDLPTYPWDHKKVLYRESRLNKNVRHRVDPPHPLLGSRTPDDTDYEPRWRNFLIMEELPWLRDHCVQGQIIVPAATYSVMALEAAKVLCRGKHVQSIELSDVAILRPIVLDEASDGTETLFSVRSDLDSNKKHEDEIHAQFTLSAGAMDDRHLRTAATGHIRITLAAEAPSSFPNGPRPTELDLLPTSVDRFYASMDEIGLSYSGPFRAMTSMKRRLNVASATVAVDRDLAGTIPVHPTWLDACFQTFLAAFAAPRDGSLWTAFMPTAIGRMVFSPSSTSQVPGRSVTVDAHITDFAPGYQVSLPTLTGDMSIFNSETNQLQIQIEDFVMSSFLPASEKDDRRFYLQNVWGQEMLSGALCAAAERCVAPTESESKIIDTCEKAVHYYLSKLKAAGLLDQWADKNPGLRSLMNEIEARVTSIPEQSDLVSMLGEVGEHIDLVLVRTIGESLLNSPSEGLGPITPSPMGALISRWHHEGLGFAQLQRHFVSAAKQISHQHANLRILQVGPSSPGLVRSVCQELGRSLERYTLVDDSEQTIEEMKSALAADQLRVDFTTASVENGIDAVNHLTSAGGFDLVIVHKAFTKQVTALKTVRNLLRPGGFMLMMAATGAQLRFPFMLMSTLPSLDDERLAQTKFINATRAETHDLLRQIGFSGVDSIALDNVPDKHTFSVVVSQALDDHIAFLRSPLTSPSPVPLSGNLLVVGGFSADIAKLATAIQSLVSTVWHGDIINVRTLAELDDEASTVEAVLSLTDLDRPVLEDVRAPTFRGLQRLFSEAKTVLWITHRAKADNPYHNATIGLGRSFQSENPQKVLQFLDVDTLDGVESAIAETFLKLIGGVNMRNSNPADPTRLWTIEPEVSLENGKYLVPRLFPDTERNDRLNALRRKVQTQVSVETQPISLSRSAQSDQVAYTAEAVHFHRDLADGATDPVTIQVELCSTEPVIPNIDNEDLFCFVGRTSEGARLVGLSTSNSSVVKVPREWTIPVDKHTSHDQGAFVLELRNEIQSLVIAKSIPPGSTTLIYEPDPHLAASLQRPGRPATSSVSFRARSTWSIPGSHILIDPHASRKDIQAKVPPKTRMLIHMEQGPETCEFLALRQALPPYATVVAFNDLAADDVNPRELLAEALSIIRGDSQSTKVPFDPSSVVKASALVAGGTREHANAAVVDWTGAQSITLSPRPVDTRNLFSPNKTYLLVGLTGHIGQSICRWMVQGGARHIVVTSRHPEKQGQLWREELLRQGVNIVIEAADVTKEHDLLDLRARIVSSMPPVGGIANGAMVLDDKLFIDMPFESFQAAMKPKVQGSIYLEEVFSADNLDFFLFFSSISVMTGQRTQANYVAANNFMVAMAERRRARGLPASVIDIGMVVGIGVIQRSQNDKGVSAMENSIRQMDYMPVSETDLHHLLAEAILVGQRDESPELITGLETYKPVEGEAPFWHHNVRFSHLITDPDAAQAGADSAGSAQKSLKEMLLSSGGPEEARKVMENALLQYLASSLKLSRETIYTDVPIIDLGIDSLVAVQIRNWTWAEAGYDLPVLKILGGSSVTQICDEVVASLSFDKSSIAAAKVDSQAAPAHKLRPWDKPSADTKRTDSIAPVPRSQIAANGPNGLPNGALKKASKLAVKVRPLWTTQAGGKDTKKGPRPAPIRIQPLSLGQSRLYFLSQYMDDDRVLNCTISYALSGKLDVSKLEQSLIQVVQRHEALRTSFYTDEKDGKPMQGLLEKSPFRLRVVPGVSASSDVETEFNLIRYRPYDLEQADTFAATLLSHSPDSHTLICGYHHIIMDGVSWQIFQKDLAMFYNNSGIADSAKHLPAQYSEFTRKQQEDLSCGAYAERLRFFQDQFREPVESLPLFPFAKVGTRKVVKQYAVQEATTHLNAKVVSAIKQASQTSRTTPFHFYLSAFQVLLHRLLETDKMCIGVVDANRSDQNFVNTIGFFLETIPLWFKVNSEQRFVELLKETRTKAYAALAQTGVPTEEILRACGVASSTTETPLFQVCFNYRMGAGRTAALQGVEMKFLDYVDAQNPFDLVATVDDLDDGTAMITLYLQDYLYDQEGAQLLATMYANVLQVLAENPERLVGSVSISNATLEDEGVKLGTGPILDLVAPSTPTLSKIFHTWVDKDPHALAVKDTTGKSKTYVQLAERANAIAASLLNAGAAPSIPIGVLLDPGVDTIATILAILRIGAAYVPLDTRSSDAVLSDILQESQPGIVIHHSATAPRSQILLKASAKTKLVTLNAVPQKTIRKIQDVSVPEGLAMILYTSGSTGSPKGIPLTNANIRTPILGVSERVPLGREVVLQQSGQGFDAAVYQIFIALANGGTLIMVDNRDDPAKVAALMAQESVTCTTHIVSEMQALLKYGYDELRNCSSWRIAMVAGEAFTVHLLDQFRALNRPDLKVINAYGPTEASICSSLGEVSFNRISSSETSIPIGKAIPNYGTYIVDQHCKPVPLGWPGEVAIAGPGVASGYLNLGELTQAKFRSAATLGEVFGSDCLYLTGDRGRMLSDGSIVLSGRVDGDDQVKIRGHRVQLGDVARALVQASRGVFADAAVILKGDDTSNPQLVAYVVFSRTSNIQDQQTYLRQLNQDLPVPAYMRPAITIPLDTLPVTDRGKLDSKKLASLPLPSISVDYEEDEQLTPTEARLRDVWKNVLGDIASSIPIRRSSDFFSVGGNSLILLALKAEIAQVFGVGLSVSELFQASTLELLAARLDGTSLLAQINWEEETAPDETQFTLPPPINGINGHGSSNGHAQGISVLLTGATGFLGGHILRQLVQLPSVEHVHCVAIRPNKVDVRRQLSVESPKIIRYSGDLALPNMGMSESEFSDLFKSIDVIVHNGAEVSHMKNYRSLRAANFLSTVGLARAAVSRGIPIHYISTGGVARLSVADEQPEASLAAFHPPIDGSDGYVASKWASEVFLEKVQRRFQGQVWIHRPSSITGDDVPDNDIAHSLLKFSRELGAVPELTGSGFFDFINVETVSNNIAASVVRSSEKSGGGLIYLHQSGEQVIPVGDLQKYVEELEGRPLQVLPLKEWVDLSIRKGLDEVLGSYMLASKGVIRAPLLQRGPHVE</sequence>
<proteinExistence type="evidence at transcript level"/>